<reference key="1">
    <citation type="submission" date="2006-03" db="EMBL/GenBank/DDBJ databases">
        <title>Complete sequence of Rhodopseudomonas palustris BisB5.</title>
        <authorList>
            <consortium name="US DOE Joint Genome Institute"/>
            <person name="Copeland A."/>
            <person name="Lucas S."/>
            <person name="Lapidus A."/>
            <person name="Barry K."/>
            <person name="Detter J.C."/>
            <person name="Glavina del Rio T."/>
            <person name="Hammon N."/>
            <person name="Israni S."/>
            <person name="Dalin E."/>
            <person name="Tice H."/>
            <person name="Pitluck S."/>
            <person name="Chain P."/>
            <person name="Malfatti S."/>
            <person name="Shin M."/>
            <person name="Vergez L."/>
            <person name="Schmutz J."/>
            <person name="Larimer F."/>
            <person name="Land M."/>
            <person name="Hauser L."/>
            <person name="Pelletier D.A."/>
            <person name="Kyrpides N."/>
            <person name="Lykidis A."/>
            <person name="Oda Y."/>
            <person name="Harwood C.S."/>
            <person name="Richardson P."/>
        </authorList>
    </citation>
    <scope>NUCLEOTIDE SEQUENCE [LARGE SCALE GENOMIC DNA]</scope>
    <source>
        <strain>BisB5</strain>
    </source>
</reference>
<protein>
    <recommendedName>
        <fullName evidence="1">Phosphonates import ATP-binding protein PhnC</fullName>
        <ecNumber evidence="1">7.3.2.2</ecNumber>
    </recommendedName>
</protein>
<sequence length="270" mass="29207">MLVIEGLTCRFGSKAAVDAASFSIDRGSFVGVIGRSGAGKSTLLRMLNRLAEPSEGRILFEGVDVTALQGRELRQWRARSAMIFQQFNLVGRLDVLTNVLMGRLAHVPAWRSLAQVWPEKDRALAMSALDQFDIAPLAAQRADQLSGGQQQRVAIARALVQEPDLILADEPIASLDPRNTKVVMDALLRINKHFGITVLCNLHSLDLARSYCDRLIGMANGRIVFDGAPAELTDSIARELYDLEADDVMGSAPVHAPIGALVPQLGTVAA</sequence>
<comment type="function">
    <text evidence="1">Part of the ABC transporter complex PhnCDE involved in phosphonates import. Responsible for energy coupling to the transport system.</text>
</comment>
<comment type="catalytic activity">
    <reaction evidence="1">
        <text>phosphonate(out) + ATP + H2O = phosphonate(in) + ADP + phosphate + H(+)</text>
        <dbReference type="Rhea" id="RHEA:18065"/>
        <dbReference type="ChEBI" id="CHEBI:15377"/>
        <dbReference type="ChEBI" id="CHEBI:15378"/>
        <dbReference type="ChEBI" id="CHEBI:16215"/>
        <dbReference type="ChEBI" id="CHEBI:30616"/>
        <dbReference type="ChEBI" id="CHEBI:43474"/>
        <dbReference type="ChEBI" id="CHEBI:456216"/>
        <dbReference type="EC" id="7.3.2.2"/>
    </reaction>
</comment>
<comment type="subunit">
    <text evidence="1">The complex is composed of two ATP-binding proteins (PhnC), two transmembrane proteins (PhnE) and a solute-binding protein (PhnD).</text>
</comment>
<comment type="subcellular location">
    <subcellularLocation>
        <location evidence="1">Cell inner membrane</location>
        <topology evidence="1">Peripheral membrane protein</topology>
    </subcellularLocation>
</comment>
<comment type="similarity">
    <text evidence="1">Belongs to the ABC transporter superfamily. Phosphonates importer (TC 3.A.1.9.1) family.</text>
</comment>
<organism>
    <name type="scientific">Rhodopseudomonas palustris (strain BisB5)</name>
    <dbReference type="NCBI Taxonomy" id="316057"/>
    <lineage>
        <taxon>Bacteria</taxon>
        <taxon>Pseudomonadati</taxon>
        <taxon>Pseudomonadota</taxon>
        <taxon>Alphaproteobacteria</taxon>
        <taxon>Hyphomicrobiales</taxon>
        <taxon>Nitrobacteraceae</taxon>
        <taxon>Rhodopseudomonas</taxon>
    </lineage>
</organism>
<proteinExistence type="inferred from homology"/>
<gene>
    <name evidence="1" type="primary">phnC</name>
    <name type="ordered locus">RPD_3820</name>
</gene>
<evidence type="ECO:0000255" key="1">
    <source>
        <dbReference type="HAMAP-Rule" id="MF_01713"/>
    </source>
</evidence>
<name>PHNC_RHOPS</name>
<accession>Q132E8</accession>
<keyword id="KW-0067">ATP-binding</keyword>
<keyword id="KW-0997">Cell inner membrane</keyword>
<keyword id="KW-1003">Cell membrane</keyword>
<keyword id="KW-0472">Membrane</keyword>
<keyword id="KW-0547">Nucleotide-binding</keyword>
<keyword id="KW-0918">Phosphonate transport</keyword>
<keyword id="KW-1278">Translocase</keyword>
<keyword id="KW-0813">Transport</keyword>
<dbReference type="EC" id="7.3.2.2" evidence="1"/>
<dbReference type="EMBL" id="CP000283">
    <property type="protein sequence ID" value="ABE41041.1"/>
    <property type="molecule type" value="Genomic_DNA"/>
</dbReference>
<dbReference type="SMR" id="Q132E8"/>
<dbReference type="STRING" id="316057.RPD_3820"/>
<dbReference type="KEGG" id="rpd:RPD_3820"/>
<dbReference type="eggNOG" id="COG3638">
    <property type="taxonomic scope" value="Bacteria"/>
</dbReference>
<dbReference type="HOGENOM" id="CLU_000604_1_22_5"/>
<dbReference type="BioCyc" id="RPAL316057:RPD_RS19200-MONOMER"/>
<dbReference type="Proteomes" id="UP000001818">
    <property type="component" value="Chromosome"/>
</dbReference>
<dbReference type="GO" id="GO:0005886">
    <property type="term" value="C:plasma membrane"/>
    <property type="evidence" value="ECO:0007669"/>
    <property type="project" value="UniProtKB-SubCell"/>
</dbReference>
<dbReference type="GO" id="GO:0015416">
    <property type="term" value="F:ABC-type phosphonate transporter activity"/>
    <property type="evidence" value="ECO:0007669"/>
    <property type="project" value="UniProtKB-EC"/>
</dbReference>
<dbReference type="GO" id="GO:0005524">
    <property type="term" value="F:ATP binding"/>
    <property type="evidence" value="ECO:0007669"/>
    <property type="project" value="UniProtKB-KW"/>
</dbReference>
<dbReference type="GO" id="GO:0016887">
    <property type="term" value="F:ATP hydrolysis activity"/>
    <property type="evidence" value="ECO:0007669"/>
    <property type="project" value="InterPro"/>
</dbReference>
<dbReference type="CDD" id="cd03256">
    <property type="entry name" value="ABC_PhnC_transporter"/>
    <property type="match status" value="1"/>
</dbReference>
<dbReference type="Gene3D" id="3.40.50.300">
    <property type="entry name" value="P-loop containing nucleotide triphosphate hydrolases"/>
    <property type="match status" value="1"/>
</dbReference>
<dbReference type="InterPro" id="IPR003593">
    <property type="entry name" value="AAA+_ATPase"/>
</dbReference>
<dbReference type="InterPro" id="IPR003439">
    <property type="entry name" value="ABC_transporter-like_ATP-bd"/>
</dbReference>
<dbReference type="InterPro" id="IPR017871">
    <property type="entry name" value="ABC_transporter-like_CS"/>
</dbReference>
<dbReference type="InterPro" id="IPR012693">
    <property type="entry name" value="ABC_transpr_PhnC"/>
</dbReference>
<dbReference type="InterPro" id="IPR050086">
    <property type="entry name" value="MetN_ABC_transporter-like"/>
</dbReference>
<dbReference type="InterPro" id="IPR027417">
    <property type="entry name" value="P-loop_NTPase"/>
</dbReference>
<dbReference type="NCBIfam" id="TIGR02315">
    <property type="entry name" value="ABC_phnC"/>
    <property type="match status" value="1"/>
</dbReference>
<dbReference type="PANTHER" id="PTHR43166">
    <property type="entry name" value="AMINO ACID IMPORT ATP-BINDING PROTEIN"/>
    <property type="match status" value="1"/>
</dbReference>
<dbReference type="PANTHER" id="PTHR43166:SF6">
    <property type="entry name" value="PHOSPHONATES IMPORT ATP-BINDING PROTEIN PHNC"/>
    <property type="match status" value="1"/>
</dbReference>
<dbReference type="Pfam" id="PF00005">
    <property type="entry name" value="ABC_tran"/>
    <property type="match status" value="1"/>
</dbReference>
<dbReference type="SMART" id="SM00382">
    <property type="entry name" value="AAA"/>
    <property type="match status" value="1"/>
</dbReference>
<dbReference type="SUPFAM" id="SSF52540">
    <property type="entry name" value="P-loop containing nucleoside triphosphate hydrolases"/>
    <property type="match status" value="1"/>
</dbReference>
<dbReference type="PROSITE" id="PS00211">
    <property type="entry name" value="ABC_TRANSPORTER_1"/>
    <property type="match status" value="1"/>
</dbReference>
<dbReference type="PROSITE" id="PS50893">
    <property type="entry name" value="ABC_TRANSPORTER_2"/>
    <property type="match status" value="1"/>
</dbReference>
<dbReference type="PROSITE" id="PS51249">
    <property type="entry name" value="PHNC"/>
    <property type="match status" value="1"/>
</dbReference>
<feature type="chain" id="PRO_0000274745" description="Phosphonates import ATP-binding protein PhnC">
    <location>
        <begin position="1"/>
        <end position="270"/>
    </location>
</feature>
<feature type="domain" description="ABC transporter" evidence="1">
    <location>
        <begin position="2"/>
        <end position="245"/>
    </location>
</feature>
<feature type="binding site" evidence="1">
    <location>
        <begin position="34"/>
        <end position="41"/>
    </location>
    <ligand>
        <name>ATP</name>
        <dbReference type="ChEBI" id="CHEBI:30616"/>
    </ligand>
</feature>